<reference key="1">
    <citation type="journal article" date="2013" name="Food Chem. Toxicol.">
        <title>Purification, physicochemical and immunological characterization of arginine kinase, an allergen of crayfish (Procambarus clarkii).</title>
        <authorList>
            <person name="Chen H.L."/>
            <person name="Mao H.Y."/>
            <person name="Cao M.J."/>
            <person name="Cai Q.F."/>
            <person name="Su W.J."/>
            <person name="Zhang Y.X."/>
            <person name="Liu G.M."/>
        </authorList>
    </citation>
    <scope>NUCLEOTIDE SEQUENCE [MRNA]</scope>
    <scope>PROTEIN SEQUENCE OF 103-124; 181-245; 256-264; 310-328 AND 330-354</scope>
    <scope>IDENTIFICATION BY MASS SPECTROMETRY</scope>
    <scope>3D-STRUCTURE MODELING</scope>
    <scope>BIOPHYSICOCHEMICAL PROPERTIES</scope>
    <scope>TISSUE SPECIFICITY</scope>
    <scope>GLYCOSYLATION</scope>
    <scope>ALLERGEN</scope>
    <source>
        <tissue evidence="6">Muscle</tissue>
    </source>
</reference>
<feature type="initiator methionine" description="Removed" evidence="1">
    <location>
        <position position="1"/>
    </location>
</feature>
<feature type="chain" id="PRO_0000447434" description="Arginine kinase Pro c 2.0101">
    <location>
        <begin position="2"/>
        <end position="357"/>
    </location>
</feature>
<feature type="domain" description="Phosphagen kinase N-terminal" evidence="2">
    <location>
        <begin position="9"/>
        <end position="91"/>
    </location>
</feature>
<feature type="domain" description="Phosphagen kinase C-terminal" evidence="3">
    <location>
        <begin position="119"/>
        <end position="356"/>
    </location>
</feature>
<feature type="binding site" evidence="1">
    <location>
        <begin position="64"/>
        <end position="68"/>
    </location>
    <ligand>
        <name>L-arginine</name>
        <dbReference type="ChEBI" id="CHEBI:32682"/>
    </ligand>
</feature>
<feature type="binding site" evidence="3">
    <location>
        <begin position="122"/>
        <end position="126"/>
    </location>
    <ligand>
        <name>ATP</name>
        <dbReference type="ChEBI" id="CHEBI:30616"/>
    </ligand>
</feature>
<feature type="binding site" evidence="3">
    <location>
        <position position="185"/>
    </location>
    <ligand>
        <name>ATP</name>
        <dbReference type="ChEBI" id="CHEBI:30616"/>
    </ligand>
</feature>
<feature type="binding site" evidence="1">
    <location>
        <position position="225"/>
    </location>
    <ligand>
        <name>L-arginine</name>
        <dbReference type="ChEBI" id="CHEBI:32682"/>
    </ligand>
</feature>
<feature type="binding site" evidence="3">
    <location>
        <position position="229"/>
    </location>
    <ligand>
        <name>ATP</name>
        <dbReference type="ChEBI" id="CHEBI:30616"/>
    </ligand>
</feature>
<feature type="binding site" evidence="1">
    <location>
        <position position="271"/>
    </location>
    <ligand>
        <name>L-arginine</name>
        <dbReference type="ChEBI" id="CHEBI:32682"/>
    </ligand>
</feature>
<feature type="binding site" evidence="3">
    <location>
        <begin position="280"/>
        <end position="284"/>
    </location>
    <ligand>
        <name>ATP</name>
        <dbReference type="ChEBI" id="CHEBI:30616"/>
    </ligand>
</feature>
<feature type="binding site" evidence="3">
    <location>
        <begin position="309"/>
        <end position="314"/>
    </location>
    <ligand>
        <name>ATP</name>
        <dbReference type="ChEBI" id="CHEBI:30616"/>
    </ligand>
</feature>
<feature type="binding site" evidence="1">
    <location>
        <position position="314"/>
    </location>
    <ligand>
        <name>L-arginine</name>
        <dbReference type="ChEBI" id="CHEBI:32682"/>
    </ligand>
</feature>
<feature type="sequence conflict" description="In Ref. 1; AA sequence." evidence="7" ref="1">
    <original>V</original>
    <variation>T</variation>
    <location>
        <position position="206"/>
    </location>
</feature>
<accession>H6VGI2</accession>
<comment type="function">
    <text evidence="1">Catalyzes the reversible transfer of high energy ATP gamma-phosphate group to L-arginine.</text>
</comment>
<comment type="catalytic activity">
    <reaction evidence="1">
        <text>L-arginine + ATP = N(omega)-phospho-L-arginine + ADP + H(+)</text>
        <dbReference type="Rhea" id="RHEA:22940"/>
        <dbReference type="ChEBI" id="CHEBI:15378"/>
        <dbReference type="ChEBI" id="CHEBI:30616"/>
        <dbReference type="ChEBI" id="CHEBI:32682"/>
        <dbReference type="ChEBI" id="CHEBI:58477"/>
        <dbReference type="ChEBI" id="CHEBI:456216"/>
        <dbReference type="EC" id="2.7.3.3"/>
    </reaction>
</comment>
<comment type="biophysicochemical properties">
    <phDependence>
        <text evidence="5">Stable at pH 4.0-8.0.</text>
    </phDependence>
    <temperatureDependence>
        <text evidence="5">Stable at 30-44 degrees Celsius. Forms aggregates above 44 degrees Celsius.</text>
    </temperatureDependence>
</comment>
<comment type="tissue specificity">
    <text evidence="5">Muscle (at protein level).</text>
</comment>
<comment type="PTM">
    <text evidence="5">Glycosylated.</text>
</comment>
<comment type="allergen">
    <text evidence="5">Causes an allergic reaction in human. Binds to IgE in 71% of the 17 patients tested allergic to crustaceans. IgE-binding activity increases in the 44-70 degrees Celsius temperature range, but is lost at 80 degrees Celsius and above. IgE-binding activity is reduced under alkaline conditions (pH 9.0-11.0), but is increased at acidic conditions (pH 1.0-3.0). Allergenicity is reduced after 1 hour pepsin-digestion in vitro. A 4-hour digestion by pancreatic enzymes in vitro has little effect on the allergenicity. No change in allergenicity after ultrasound treatment. Reduced allergenicity after 180 s of microwave treatment or after boiling. The reduction in allergenicity is correlated with the treatment duration.</text>
</comment>
<comment type="similarity">
    <text evidence="3 4 7">Belongs to the ATP:guanido phosphotransferase family.</text>
</comment>
<keyword id="KW-0020">Allergen</keyword>
<keyword id="KW-0067">ATP-binding</keyword>
<keyword id="KW-0903">Direct protein sequencing</keyword>
<keyword id="KW-0325">Glycoprotein</keyword>
<keyword id="KW-0418">Kinase</keyword>
<keyword id="KW-0547">Nucleotide-binding</keyword>
<keyword id="KW-0808">Transferase</keyword>
<proteinExistence type="evidence at protein level"/>
<organism evidence="8">
    <name type="scientific">Procambarus clarkii</name>
    <name type="common">Red swamp crayfish</name>
    <dbReference type="NCBI Taxonomy" id="6728"/>
    <lineage>
        <taxon>Eukaryota</taxon>
        <taxon>Metazoa</taxon>
        <taxon>Ecdysozoa</taxon>
        <taxon>Arthropoda</taxon>
        <taxon>Crustacea</taxon>
        <taxon>Multicrustacea</taxon>
        <taxon>Malacostraca</taxon>
        <taxon>Eumalacostraca</taxon>
        <taxon>Eucarida</taxon>
        <taxon>Decapoda</taxon>
        <taxon>Pleocyemata</taxon>
        <taxon>Astacidea</taxon>
        <taxon>Astacoidea</taxon>
        <taxon>Cambaridae</taxon>
        <taxon>Procambarus</taxon>
    </lineage>
</organism>
<evidence type="ECO:0000250" key="1">
    <source>
        <dbReference type="UniProtKB" id="Q004B5"/>
    </source>
</evidence>
<evidence type="ECO:0000255" key="2">
    <source>
        <dbReference type="PROSITE-ProRule" id="PRU00842"/>
    </source>
</evidence>
<evidence type="ECO:0000255" key="3">
    <source>
        <dbReference type="PROSITE-ProRule" id="PRU00843"/>
    </source>
</evidence>
<evidence type="ECO:0000255" key="4">
    <source>
        <dbReference type="RuleBase" id="RU000505"/>
    </source>
</evidence>
<evidence type="ECO:0000269" key="5">
    <source>
    </source>
</evidence>
<evidence type="ECO:0000303" key="6">
    <source>
    </source>
</evidence>
<evidence type="ECO:0000305" key="7"/>
<evidence type="ECO:0000312" key="8">
    <source>
        <dbReference type="EMBL" id="AFA45339.1"/>
    </source>
</evidence>
<sequence length="357" mass="40120">MADAATIAKLEEGFKKLEAATDCKSLLKKYLSKSIFDSLKAKKTGLGATLLDVIQSGVENLDSGVGIYAPDAEAYSLFAPLFDPIIEDYHKGFKQTDKHPNKDFGDVNQFVNVDPDGKFVISTRVRCGRSLEGYPFNPCLTEAQYKEMEEKVSSTLSGLEGELKGTYYPLAGMTKEVQQKLIDDHFLFKEGDRFLQAANACRYWPVGRGIYHNDNKTFLVWCNEEDHLRIISMQMGGDLGQVYRRLVSAVNDIEKRVPFSHHDRLGFLTFCPTNLGTTIRASVHIKLPKLAANREKLEEVAARYSLQVRGTRGEHTEAEGGVYDISNKRRMGLTEFQAVKEMQDGILELIKIEKEMA</sequence>
<dbReference type="EC" id="2.7.3.3" evidence="1"/>
<dbReference type="EMBL" id="JN828651">
    <property type="protein sequence ID" value="AFA45339.1"/>
    <property type="molecule type" value="mRNA"/>
</dbReference>
<dbReference type="RefSeq" id="XP_045591110.1">
    <property type="nucleotide sequence ID" value="XM_045735154.2"/>
</dbReference>
<dbReference type="SMR" id="H6VGI2"/>
<dbReference type="Allergome" id="11413">
    <property type="allergen name" value="Pro c 2"/>
</dbReference>
<dbReference type="Allergome" id="12146">
    <property type="allergen name" value="Pro c 2.0101"/>
</dbReference>
<dbReference type="EnsemblMetazoa" id="XM_045735154.1">
    <property type="protein sequence ID" value="XP_045591110.1"/>
    <property type="gene ID" value="LOC123753162"/>
</dbReference>
<dbReference type="GeneID" id="123753162"/>
<dbReference type="OrthoDB" id="430219at2759"/>
<dbReference type="BRENDA" id="2.7.3.3">
    <property type="organism ID" value="7182"/>
</dbReference>
<dbReference type="GO" id="GO:0005615">
    <property type="term" value="C:extracellular space"/>
    <property type="evidence" value="ECO:0007669"/>
    <property type="project" value="TreeGrafter"/>
</dbReference>
<dbReference type="GO" id="GO:0034618">
    <property type="term" value="F:arginine binding"/>
    <property type="evidence" value="ECO:0000250"/>
    <property type="project" value="UniProtKB"/>
</dbReference>
<dbReference type="GO" id="GO:0004054">
    <property type="term" value="F:arginine kinase activity"/>
    <property type="evidence" value="ECO:0000250"/>
    <property type="project" value="UniProtKB"/>
</dbReference>
<dbReference type="GO" id="GO:0005524">
    <property type="term" value="F:ATP binding"/>
    <property type="evidence" value="ECO:0000250"/>
    <property type="project" value="UniProtKB"/>
</dbReference>
<dbReference type="GO" id="GO:0004111">
    <property type="term" value="F:creatine kinase activity"/>
    <property type="evidence" value="ECO:0007669"/>
    <property type="project" value="InterPro"/>
</dbReference>
<dbReference type="GO" id="GO:0046314">
    <property type="term" value="P:phosphocreatine biosynthetic process"/>
    <property type="evidence" value="ECO:0007669"/>
    <property type="project" value="InterPro"/>
</dbReference>
<dbReference type="CDD" id="cd07932">
    <property type="entry name" value="arginine_kinase_like"/>
    <property type="match status" value="1"/>
</dbReference>
<dbReference type="FunFam" id="3.30.590.10:FF:000006">
    <property type="entry name" value="Arginine kinase 1"/>
    <property type="match status" value="1"/>
</dbReference>
<dbReference type="FunFam" id="1.10.135.10:FF:000003">
    <property type="entry name" value="Three-domain arginine kinase"/>
    <property type="match status" value="1"/>
</dbReference>
<dbReference type="Gene3D" id="1.10.135.10">
    <property type="entry name" value="ATP:guanido phosphotransferase, N-terminal domain"/>
    <property type="match status" value="1"/>
</dbReference>
<dbReference type="Gene3D" id="3.30.590.10">
    <property type="entry name" value="Glutamine synthetase/guanido kinase, catalytic domain"/>
    <property type="match status" value="1"/>
</dbReference>
<dbReference type="InterPro" id="IPR000749">
    <property type="entry name" value="ATP-guanido_PTrfase"/>
</dbReference>
<dbReference type="InterPro" id="IPR022415">
    <property type="entry name" value="ATP-guanido_PTrfase_AS"/>
</dbReference>
<dbReference type="InterPro" id="IPR022414">
    <property type="entry name" value="ATP-guanido_PTrfase_cat"/>
</dbReference>
<dbReference type="InterPro" id="IPR022413">
    <property type="entry name" value="ATP-guanido_PTrfase_N"/>
</dbReference>
<dbReference type="InterPro" id="IPR036802">
    <property type="entry name" value="ATP-guanido_PTrfase_N_sf"/>
</dbReference>
<dbReference type="InterPro" id="IPR014746">
    <property type="entry name" value="Gln_synth/guanido_kin_cat_dom"/>
</dbReference>
<dbReference type="PANTHER" id="PTHR11547:SF38">
    <property type="entry name" value="ARGININE KINASE 1-RELATED"/>
    <property type="match status" value="1"/>
</dbReference>
<dbReference type="PANTHER" id="PTHR11547">
    <property type="entry name" value="ARGININE OR CREATINE KINASE"/>
    <property type="match status" value="1"/>
</dbReference>
<dbReference type="Pfam" id="PF00217">
    <property type="entry name" value="ATP-gua_Ptrans"/>
    <property type="match status" value="1"/>
</dbReference>
<dbReference type="Pfam" id="PF02807">
    <property type="entry name" value="ATP-gua_PtransN"/>
    <property type="match status" value="1"/>
</dbReference>
<dbReference type="SUPFAM" id="SSF55931">
    <property type="entry name" value="Glutamine synthetase/guanido kinase"/>
    <property type="match status" value="1"/>
</dbReference>
<dbReference type="SUPFAM" id="SSF48034">
    <property type="entry name" value="Guanido kinase N-terminal domain"/>
    <property type="match status" value="1"/>
</dbReference>
<dbReference type="PROSITE" id="PS00112">
    <property type="entry name" value="PHOSPHAGEN_KINASE"/>
    <property type="match status" value="1"/>
</dbReference>
<dbReference type="PROSITE" id="PS51510">
    <property type="entry name" value="PHOSPHAGEN_KINASE_C"/>
    <property type="match status" value="1"/>
</dbReference>
<dbReference type="PROSITE" id="PS51509">
    <property type="entry name" value="PHOSPHAGEN_KINASE_N"/>
    <property type="match status" value="1"/>
</dbReference>
<name>KARG_PROCL</name>
<protein>
    <recommendedName>
        <fullName evidence="6">Arginine kinase Pro c 2.0101</fullName>
        <shortName evidence="6">AK</shortName>
        <ecNumber evidence="1">2.7.3.3</ecNumber>
    </recommendedName>
    <allergenName evidence="7">Pro c 2.0101</allergenName>
</protein>